<protein>
    <recommendedName>
        <fullName evidence="7">Scolexin B</fullName>
        <ecNumber>3.4.21.-</ecNumber>
    </recommendedName>
</protein>
<keyword id="KW-0903">Direct protein sequencing</keyword>
<keyword id="KW-1015">Disulfide bond</keyword>
<keyword id="KW-0378">Hydrolase</keyword>
<keyword id="KW-0645">Protease</keyword>
<keyword id="KW-0720">Serine protease</keyword>
<keyword id="KW-0732">Signal</keyword>
<dbReference type="EC" id="3.4.21.-"/>
<dbReference type="EMBL" id="FJ561484">
    <property type="protein sequence ID" value="ACO55200.1"/>
    <property type="molecule type" value="mRNA"/>
</dbReference>
<dbReference type="SMR" id="C1JE15"/>
<dbReference type="GO" id="GO:0004252">
    <property type="term" value="F:serine-type endopeptidase activity"/>
    <property type="evidence" value="ECO:0007669"/>
    <property type="project" value="InterPro"/>
</dbReference>
<dbReference type="GO" id="GO:0006508">
    <property type="term" value="P:proteolysis"/>
    <property type="evidence" value="ECO:0007669"/>
    <property type="project" value="UniProtKB-KW"/>
</dbReference>
<dbReference type="Gene3D" id="2.40.10.10">
    <property type="entry name" value="Trypsin-like serine proteases"/>
    <property type="match status" value="1"/>
</dbReference>
<dbReference type="InterPro" id="IPR051333">
    <property type="entry name" value="CLIP_Serine_Protease"/>
</dbReference>
<dbReference type="InterPro" id="IPR009003">
    <property type="entry name" value="Peptidase_S1_PA"/>
</dbReference>
<dbReference type="InterPro" id="IPR043504">
    <property type="entry name" value="Peptidase_S1_PA_chymotrypsin"/>
</dbReference>
<dbReference type="InterPro" id="IPR001314">
    <property type="entry name" value="Peptidase_S1A"/>
</dbReference>
<dbReference type="InterPro" id="IPR001254">
    <property type="entry name" value="Trypsin_dom"/>
</dbReference>
<dbReference type="InterPro" id="IPR018114">
    <property type="entry name" value="TRYPSIN_HIS"/>
</dbReference>
<dbReference type="PANTHER" id="PTHR24260">
    <property type="match status" value="1"/>
</dbReference>
<dbReference type="PANTHER" id="PTHR24260:SF132">
    <property type="entry name" value="PEPTIDASE S1 DOMAIN-CONTAINING PROTEIN"/>
    <property type="match status" value="1"/>
</dbReference>
<dbReference type="Pfam" id="PF00089">
    <property type="entry name" value="Trypsin"/>
    <property type="match status" value="1"/>
</dbReference>
<dbReference type="PRINTS" id="PR00722">
    <property type="entry name" value="CHYMOTRYPSIN"/>
</dbReference>
<dbReference type="SMART" id="SM00020">
    <property type="entry name" value="Tryp_SPc"/>
    <property type="match status" value="1"/>
</dbReference>
<dbReference type="SUPFAM" id="SSF50494">
    <property type="entry name" value="Trypsin-like serine proteases"/>
    <property type="match status" value="1"/>
</dbReference>
<dbReference type="PROSITE" id="PS50240">
    <property type="entry name" value="TRYPSIN_DOM"/>
    <property type="match status" value="1"/>
</dbReference>
<dbReference type="PROSITE" id="PS00134">
    <property type="entry name" value="TRYPSIN_HIS"/>
    <property type="match status" value="1"/>
</dbReference>
<evidence type="ECO:0000250" key="1">
    <source>
        <dbReference type="UniProtKB" id="Q9UL52"/>
    </source>
</evidence>
<evidence type="ECO:0000255" key="2"/>
<evidence type="ECO:0000255" key="3">
    <source>
        <dbReference type="PROSITE-ProRule" id="PRU00274"/>
    </source>
</evidence>
<evidence type="ECO:0000256" key="4">
    <source>
        <dbReference type="SAM" id="MobiDB-lite"/>
    </source>
</evidence>
<evidence type="ECO:0000269" key="5">
    <source>
    </source>
</evidence>
<evidence type="ECO:0000305" key="6"/>
<evidence type="ECO:0000312" key="7">
    <source>
        <dbReference type="EMBL" id="ACO55200.1"/>
    </source>
</evidence>
<comment type="similarity">
    <text evidence="3">Belongs to the peptidase S1 family.</text>
</comment>
<name>SCLXB_HELVI</name>
<feature type="signal peptide" evidence="2">
    <location>
        <begin position="1"/>
        <end position="20"/>
    </location>
</feature>
<feature type="chain" id="PRO_0000386591" description="Scolexin B" evidence="2">
    <location>
        <begin position="21"/>
        <end position="288"/>
    </location>
</feature>
<feature type="domain" description="Peptidase S1" evidence="3">
    <location>
        <begin position="21"/>
        <end position="287"/>
    </location>
</feature>
<feature type="region of interest" description="Disordered" evidence="4">
    <location>
        <begin position="27"/>
        <end position="56"/>
    </location>
</feature>
<feature type="active site" description="Charge relay system" evidence="1">
    <location>
        <position position="87"/>
    </location>
</feature>
<feature type="active site" description="Charge relay system" evidence="1">
    <location>
        <position position="145"/>
    </location>
</feature>
<feature type="active site" description="Charge relay system" evidence="1">
    <location>
        <position position="239"/>
    </location>
</feature>
<feature type="disulfide bond" evidence="1 3">
    <location>
        <begin position="72"/>
        <end position="88"/>
    </location>
</feature>
<feature type="disulfide bond" evidence="1 3">
    <location>
        <begin position="210"/>
        <end position="223"/>
    </location>
</feature>
<feature type="disulfide bond" evidence="1 3">
    <location>
        <begin position="235"/>
        <end position="264"/>
    </location>
</feature>
<proteinExistence type="evidence at protein level"/>
<organism>
    <name type="scientific">Heliothis virescens</name>
    <name type="common">Tobacco budworm moth</name>
    <dbReference type="NCBI Taxonomy" id="7102"/>
    <lineage>
        <taxon>Eukaryota</taxon>
        <taxon>Metazoa</taxon>
        <taxon>Ecdysozoa</taxon>
        <taxon>Arthropoda</taxon>
        <taxon>Hexapoda</taxon>
        <taxon>Insecta</taxon>
        <taxon>Pterygota</taxon>
        <taxon>Neoptera</taxon>
        <taxon>Endopterygota</taxon>
        <taxon>Lepidoptera</taxon>
        <taxon>Glossata</taxon>
        <taxon>Ditrysia</taxon>
        <taxon>Noctuoidea</taxon>
        <taxon>Noctuidae</taxon>
        <taxon>Heliothinae</taxon>
        <taxon>Heliothis</taxon>
    </lineage>
</organism>
<reference evidence="7" key="1">
    <citation type="journal article" date="2009" name="J. Invertebr. Pathol.">
        <title>Analysis of ESTs generated from immune-stimulated hemocytes of larval Heliothis virescens.</title>
        <authorList>
            <person name="Shelby K.S."/>
            <person name="Popham H.J.R."/>
        </authorList>
    </citation>
    <scope>NUCLEOTIDE SEQUENCE [MRNA]</scope>
    <source>
        <tissue evidence="5">Larval hemolymph</tissue>
    </source>
</reference>
<reference evidence="6" key="2">
    <citation type="submission" date="2009-09" db="UniProtKB">
        <authorList>
            <person name="Shelby K.S."/>
        </authorList>
    </citation>
    <scope>PROTEIN SEQUENCE OF 237-249</scope>
    <source>
        <tissue>Hemolymph</tissue>
    </source>
</reference>
<accession>C1JE15</accession>
<sequence>MFASKLAVCSALALLAVAHAAPGGNDIQKITKAPNVPTKAEGDAASKASAPAIPPKPVNERFPHAVLFGGTCGGTIISPTWILTAGHCTLFTGGRYILAGTNNTDNPNAVTRHVKRQVIHPLFSVGPYWLDADDFNIKQVAARWDFLLAELSEPLPLDGKLMAAAKLDDQPSLPVGLNVGFGGYGTDHFGGTMRSEMHGMELAVQSDEVCSTLEQYNSKDMLCVKGRPPRFDSACNGDSGSGLVDETGRVIGVASWVENDAHSCFNGALVVFSRVASVRDWIKKVTNI</sequence>